<gene>
    <name evidence="1" type="primary">alaS</name>
    <name type="ordered locus">Tpet_1387</name>
</gene>
<name>SYA_THEP1</name>
<reference key="1">
    <citation type="submission" date="2007-05" db="EMBL/GenBank/DDBJ databases">
        <title>Complete sequence of Thermotoga petrophila RKU-1.</title>
        <authorList>
            <consortium name="US DOE Joint Genome Institute"/>
            <person name="Copeland A."/>
            <person name="Lucas S."/>
            <person name="Lapidus A."/>
            <person name="Barry K."/>
            <person name="Glavina del Rio T."/>
            <person name="Dalin E."/>
            <person name="Tice H."/>
            <person name="Pitluck S."/>
            <person name="Sims D."/>
            <person name="Brettin T."/>
            <person name="Bruce D."/>
            <person name="Detter J.C."/>
            <person name="Han C."/>
            <person name="Tapia R."/>
            <person name="Schmutz J."/>
            <person name="Larimer F."/>
            <person name="Land M."/>
            <person name="Hauser L."/>
            <person name="Kyrpides N."/>
            <person name="Mikhailova N."/>
            <person name="Nelson K."/>
            <person name="Gogarten J.P."/>
            <person name="Noll K."/>
            <person name="Richardson P."/>
        </authorList>
    </citation>
    <scope>NUCLEOTIDE SEQUENCE [LARGE SCALE GENOMIC DNA]</scope>
    <source>
        <strain>ATCC BAA-488 / DSM 13995 / JCM 10881 / RKU-1</strain>
    </source>
</reference>
<comment type="function">
    <text evidence="1">Catalyzes the attachment of alanine to tRNA(Ala) in a two-step reaction: alanine is first activated by ATP to form Ala-AMP and then transferred to the acceptor end of tRNA(Ala). Also edits incorrectly charged Ser-tRNA(Ala) and Gly-tRNA(Ala) via its editing domain.</text>
</comment>
<comment type="catalytic activity">
    <reaction evidence="1">
        <text>tRNA(Ala) + L-alanine + ATP = L-alanyl-tRNA(Ala) + AMP + diphosphate</text>
        <dbReference type="Rhea" id="RHEA:12540"/>
        <dbReference type="Rhea" id="RHEA-COMP:9657"/>
        <dbReference type="Rhea" id="RHEA-COMP:9923"/>
        <dbReference type="ChEBI" id="CHEBI:30616"/>
        <dbReference type="ChEBI" id="CHEBI:33019"/>
        <dbReference type="ChEBI" id="CHEBI:57972"/>
        <dbReference type="ChEBI" id="CHEBI:78442"/>
        <dbReference type="ChEBI" id="CHEBI:78497"/>
        <dbReference type="ChEBI" id="CHEBI:456215"/>
        <dbReference type="EC" id="6.1.1.7"/>
    </reaction>
</comment>
<comment type="cofactor">
    <cofactor evidence="1">
        <name>Zn(2+)</name>
        <dbReference type="ChEBI" id="CHEBI:29105"/>
    </cofactor>
    <text evidence="1">Binds 1 zinc ion per subunit.</text>
</comment>
<comment type="subcellular location">
    <subcellularLocation>
        <location evidence="1">Cytoplasm</location>
    </subcellularLocation>
</comment>
<comment type="domain">
    <text evidence="1">Consists of three domains; the N-terminal catalytic domain, the editing domain and the C-terminal C-Ala domain. The editing domain removes incorrectly charged amino acids, while the C-Ala domain, along with tRNA(Ala), serves as a bridge to cooperatively bring together the editing and aminoacylation centers thus stimulating deacylation of misacylated tRNAs.</text>
</comment>
<comment type="similarity">
    <text evidence="1">Belongs to the class-II aminoacyl-tRNA synthetase family.</text>
</comment>
<accession>A5IMH8</accession>
<proteinExistence type="inferred from homology"/>
<evidence type="ECO:0000255" key="1">
    <source>
        <dbReference type="HAMAP-Rule" id="MF_00036"/>
    </source>
</evidence>
<feature type="chain" id="PRO_0000347851" description="Alanine--tRNA ligase">
    <location>
        <begin position="1"/>
        <end position="863"/>
    </location>
</feature>
<feature type="binding site" evidence="1">
    <location>
        <position position="561"/>
    </location>
    <ligand>
        <name>Zn(2+)</name>
        <dbReference type="ChEBI" id="CHEBI:29105"/>
    </ligand>
</feature>
<feature type="binding site" evidence="1">
    <location>
        <position position="565"/>
    </location>
    <ligand>
        <name>Zn(2+)</name>
        <dbReference type="ChEBI" id="CHEBI:29105"/>
    </ligand>
</feature>
<feature type="binding site" evidence="1">
    <location>
        <position position="663"/>
    </location>
    <ligand>
        <name>Zn(2+)</name>
        <dbReference type="ChEBI" id="CHEBI:29105"/>
    </ligand>
</feature>
<feature type="binding site" evidence="1">
    <location>
        <position position="667"/>
    </location>
    <ligand>
        <name>Zn(2+)</name>
        <dbReference type="ChEBI" id="CHEBI:29105"/>
    </ligand>
</feature>
<sequence length="863" mass="98138">MRYMTSEEIREAFLKFFEKKGHKILPSASLIPDDPQLLFTVAGMVPFKPIFWGKVEPVYTRVATCQKCLRTVDIENVGKTPRHHTFFEMLGNFSFGDYFKEEAIEWAWEFLTQVLGVPEEKLWVSVYEEDEEAFRIWNEKIGLPEKKILRMGKEDNFWGPAGPTGPCGPDTEIFYDTGYSKGCPEGEECTPANSEGRFVEIWNLVFTEYYQDEEGKLHPLPRKNIDTGAGLERFCAMMQGVYSNFDTDLFQPIINRIEELTGVGYKTDEEKDVSIRVIADHMRAITFLISEGVFPSNEGRGYVLRRIIRRAMRHGILLGMSEPFLYRIVDAVAEKMGKVYPEIVRGESMVKEVLSAEESRFLKTLEQGMKVFDEIVEKKGRIDSEDAFKLYDTYGLPLELTLEIAREKGVEVDVKEFNKYMEEQQRKSRVALGDVEFARRYEYLEELPKDFRTEFTGYEKLEDEGEVVLIAKNEKAVEDATEDAVEVVFSKTPFYAEKGGQVSDTGTVEWEDGKALVEYVFEASEGVIVHRIKVLAGTLRRGQKVVLRVDKKRREATMRNHTATHLLHAALKKVLGDHVRQAGSLVAPDRLRFDFTHFKGLSMAEIEQVENLVNEWIMEAIPVEVRYTSYEEAVKSGVVALFTEKYGDVVRVVEVPGVSKELCGGTHVSNTGQIGLFKIISEESVSSGVRRIEAVTGFSTLELLRNQKKLIDQLKEILGAREDELTDRVLGLREKVKELEKKLSQGRISEEKIAMKQLEDGARVFYAVFEDVEAKHLGGIADNVLKKEREGIVILLSKFEDKVSLVVKVSENLLDKYDASSIARNIAKELGGSGGGRRNFAQAGGRHPEKIRGVLERLEEFLR</sequence>
<keyword id="KW-0030">Aminoacyl-tRNA synthetase</keyword>
<keyword id="KW-0067">ATP-binding</keyword>
<keyword id="KW-0963">Cytoplasm</keyword>
<keyword id="KW-0436">Ligase</keyword>
<keyword id="KW-0479">Metal-binding</keyword>
<keyword id="KW-0547">Nucleotide-binding</keyword>
<keyword id="KW-0648">Protein biosynthesis</keyword>
<keyword id="KW-0694">RNA-binding</keyword>
<keyword id="KW-0820">tRNA-binding</keyword>
<keyword id="KW-0862">Zinc</keyword>
<dbReference type="EC" id="6.1.1.7" evidence="1"/>
<dbReference type="EMBL" id="CP000702">
    <property type="protein sequence ID" value="ABQ47401.1"/>
    <property type="molecule type" value="Genomic_DNA"/>
</dbReference>
<dbReference type="RefSeq" id="WP_011943860.1">
    <property type="nucleotide sequence ID" value="NC_009486.1"/>
</dbReference>
<dbReference type="SMR" id="A5IMH8"/>
<dbReference type="STRING" id="390874.Tpet_1387"/>
<dbReference type="KEGG" id="tpt:Tpet_1387"/>
<dbReference type="eggNOG" id="COG0013">
    <property type="taxonomic scope" value="Bacteria"/>
</dbReference>
<dbReference type="HOGENOM" id="CLU_004485_1_1_0"/>
<dbReference type="Proteomes" id="UP000006558">
    <property type="component" value="Chromosome"/>
</dbReference>
<dbReference type="GO" id="GO:0005829">
    <property type="term" value="C:cytosol"/>
    <property type="evidence" value="ECO:0007669"/>
    <property type="project" value="TreeGrafter"/>
</dbReference>
<dbReference type="GO" id="GO:0004813">
    <property type="term" value="F:alanine-tRNA ligase activity"/>
    <property type="evidence" value="ECO:0007669"/>
    <property type="project" value="UniProtKB-UniRule"/>
</dbReference>
<dbReference type="GO" id="GO:0002161">
    <property type="term" value="F:aminoacyl-tRNA deacylase activity"/>
    <property type="evidence" value="ECO:0007669"/>
    <property type="project" value="TreeGrafter"/>
</dbReference>
<dbReference type="GO" id="GO:0005524">
    <property type="term" value="F:ATP binding"/>
    <property type="evidence" value="ECO:0007669"/>
    <property type="project" value="UniProtKB-UniRule"/>
</dbReference>
<dbReference type="GO" id="GO:0000049">
    <property type="term" value="F:tRNA binding"/>
    <property type="evidence" value="ECO:0007669"/>
    <property type="project" value="UniProtKB-KW"/>
</dbReference>
<dbReference type="GO" id="GO:0008270">
    <property type="term" value="F:zinc ion binding"/>
    <property type="evidence" value="ECO:0007669"/>
    <property type="project" value="UniProtKB-UniRule"/>
</dbReference>
<dbReference type="GO" id="GO:0006419">
    <property type="term" value="P:alanyl-tRNA aminoacylation"/>
    <property type="evidence" value="ECO:0007669"/>
    <property type="project" value="UniProtKB-UniRule"/>
</dbReference>
<dbReference type="CDD" id="cd00673">
    <property type="entry name" value="AlaRS_core"/>
    <property type="match status" value="1"/>
</dbReference>
<dbReference type="FunFam" id="2.40.30.130:FF:000001">
    <property type="entry name" value="Alanine--tRNA ligase"/>
    <property type="match status" value="1"/>
</dbReference>
<dbReference type="FunFam" id="3.10.310.40:FF:000001">
    <property type="entry name" value="Alanine--tRNA ligase"/>
    <property type="match status" value="1"/>
</dbReference>
<dbReference type="FunFam" id="3.30.54.20:FF:000001">
    <property type="entry name" value="Alanine--tRNA ligase"/>
    <property type="match status" value="1"/>
</dbReference>
<dbReference type="FunFam" id="3.30.930.10:FF:000004">
    <property type="entry name" value="Alanine--tRNA ligase"/>
    <property type="match status" value="1"/>
</dbReference>
<dbReference type="FunFam" id="3.30.980.10:FF:000004">
    <property type="entry name" value="Alanine--tRNA ligase, cytoplasmic"/>
    <property type="match status" value="1"/>
</dbReference>
<dbReference type="Gene3D" id="2.40.30.130">
    <property type="match status" value="1"/>
</dbReference>
<dbReference type="Gene3D" id="3.10.310.40">
    <property type="match status" value="1"/>
</dbReference>
<dbReference type="Gene3D" id="3.30.54.20">
    <property type="match status" value="1"/>
</dbReference>
<dbReference type="Gene3D" id="3.30.930.10">
    <property type="entry name" value="Bira Bifunctional Protein, Domain 2"/>
    <property type="match status" value="1"/>
</dbReference>
<dbReference type="Gene3D" id="3.30.980.10">
    <property type="entry name" value="Threonyl-trna Synthetase, Chain A, domain 2"/>
    <property type="match status" value="1"/>
</dbReference>
<dbReference type="HAMAP" id="MF_00036_B">
    <property type="entry name" value="Ala_tRNA_synth_B"/>
    <property type="match status" value="1"/>
</dbReference>
<dbReference type="InterPro" id="IPR045864">
    <property type="entry name" value="aa-tRNA-synth_II/BPL/LPL"/>
</dbReference>
<dbReference type="InterPro" id="IPR002318">
    <property type="entry name" value="Ala-tRNA-lgiase_IIc"/>
</dbReference>
<dbReference type="InterPro" id="IPR018162">
    <property type="entry name" value="Ala-tRNA-ligase_IIc_anticod-bd"/>
</dbReference>
<dbReference type="InterPro" id="IPR018165">
    <property type="entry name" value="Ala-tRNA-synth_IIc_core"/>
</dbReference>
<dbReference type="InterPro" id="IPR018164">
    <property type="entry name" value="Ala-tRNA-synth_IIc_N"/>
</dbReference>
<dbReference type="InterPro" id="IPR050058">
    <property type="entry name" value="Ala-tRNA_ligase"/>
</dbReference>
<dbReference type="InterPro" id="IPR023033">
    <property type="entry name" value="Ala_tRNA_ligase_euk/bac"/>
</dbReference>
<dbReference type="InterPro" id="IPR003156">
    <property type="entry name" value="DHHA1_dom"/>
</dbReference>
<dbReference type="InterPro" id="IPR018163">
    <property type="entry name" value="Thr/Ala-tRNA-synth_IIc_edit"/>
</dbReference>
<dbReference type="InterPro" id="IPR009000">
    <property type="entry name" value="Transl_B-barrel_sf"/>
</dbReference>
<dbReference type="InterPro" id="IPR012947">
    <property type="entry name" value="tRNA_SAD"/>
</dbReference>
<dbReference type="NCBIfam" id="TIGR00344">
    <property type="entry name" value="alaS"/>
    <property type="match status" value="1"/>
</dbReference>
<dbReference type="PANTHER" id="PTHR11777:SF9">
    <property type="entry name" value="ALANINE--TRNA LIGASE, CYTOPLASMIC"/>
    <property type="match status" value="1"/>
</dbReference>
<dbReference type="PANTHER" id="PTHR11777">
    <property type="entry name" value="ALANYL-TRNA SYNTHETASE"/>
    <property type="match status" value="1"/>
</dbReference>
<dbReference type="Pfam" id="PF02272">
    <property type="entry name" value="DHHA1"/>
    <property type="match status" value="1"/>
</dbReference>
<dbReference type="Pfam" id="PF01411">
    <property type="entry name" value="tRNA-synt_2c"/>
    <property type="match status" value="1"/>
</dbReference>
<dbReference type="Pfam" id="PF07973">
    <property type="entry name" value="tRNA_SAD"/>
    <property type="match status" value="1"/>
</dbReference>
<dbReference type="PRINTS" id="PR00980">
    <property type="entry name" value="TRNASYNTHALA"/>
</dbReference>
<dbReference type="SMART" id="SM00863">
    <property type="entry name" value="tRNA_SAD"/>
    <property type="match status" value="1"/>
</dbReference>
<dbReference type="SUPFAM" id="SSF55681">
    <property type="entry name" value="Class II aaRS and biotin synthetases"/>
    <property type="match status" value="1"/>
</dbReference>
<dbReference type="SUPFAM" id="SSF101353">
    <property type="entry name" value="Putative anticodon-binding domain of alanyl-tRNA synthetase (AlaRS)"/>
    <property type="match status" value="1"/>
</dbReference>
<dbReference type="SUPFAM" id="SSF55186">
    <property type="entry name" value="ThrRS/AlaRS common domain"/>
    <property type="match status" value="1"/>
</dbReference>
<dbReference type="SUPFAM" id="SSF50447">
    <property type="entry name" value="Translation proteins"/>
    <property type="match status" value="1"/>
</dbReference>
<dbReference type="PROSITE" id="PS50860">
    <property type="entry name" value="AA_TRNA_LIGASE_II_ALA"/>
    <property type="match status" value="1"/>
</dbReference>
<organism>
    <name type="scientific">Thermotoga petrophila (strain ATCC BAA-488 / DSM 13995 / JCM 10881 / RKU-1)</name>
    <dbReference type="NCBI Taxonomy" id="390874"/>
    <lineage>
        <taxon>Bacteria</taxon>
        <taxon>Thermotogati</taxon>
        <taxon>Thermotogota</taxon>
        <taxon>Thermotogae</taxon>
        <taxon>Thermotogales</taxon>
        <taxon>Thermotogaceae</taxon>
        <taxon>Thermotoga</taxon>
    </lineage>
</organism>
<protein>
    <recommendedName>
        <fullName evidence="1">Alanine--tRNA ligase</fullName>
        <ecNumber evidence="1">6.1.1.7</ecNumber>
    </recommendedName>
    <alternativeName>
        <fullName evidence="1">Alanyl-tRNA synthetase</fullName>
        <shortName evidence="1">AlaRS</shortName>
    </alternativeName>
</protein>